<keyword id="KW-0067">ATP-binding</keyword>
<keyword id="KW-0963">Cytoplasm</keyword>
<keyword id="KW-0227">DNA damage</keyword>
<keyword id="KW-0234">DNA repair</keyword>
<keyword id="KW-0235">DNA replication</keyword>
<keyword id="KW-0238">DNA-binding</keyword>
<keyword id="KW-0547">Nucleotide-binding</keyword>
<keyword id="KW-0742">SOS response</keyword>
<dbReference type="EMBL" id="CP000036">
    <property type="protein sequence ID" value="ABB68155.1"/>
    <property type="molecule type" value="Genomic_DNA"/>
</dbReference>
<dbReference type="RefSeq" id="WP_000060106.1">
    <property type="nucleotide sequence ID" value="NC_007613.1"/>
</dbReference>
<dbReference type="SMR" id="Q31UV3"/>
<dbReference type="KEGG" id="sbo:SBO_3677"/>
<dbReference type="HOGENOM" id="CLU_040267_0_0_6"/>
<dbReference type="Proteomes" id="UP000007067">
    <property type="component" value="Chromosome"/>
</dbReference>
<dbReference type="GO" id="GO:0005737">
    <property type="term" value="C:cytoplasm"/>
    <property type="evidence" value="ECO:0007669"/>
    <property type="project" value="UniProtKB-SubCell"/>
</dbReference>
<dbReference type="GO" id="GO:0005524">
    <property type="term" value="F:ATP binding"/>
    <property type="evidence" value="ECO:0007669"/>
    <property type="project" value="UniProtKB-UniRule"/>
</dbReference>
<dbReference type="GO" id="GO:0003697">
    <property type="term" value="F:single-stranded DNA binding"/>
    <property type="evidence" value="ECO:0007669"/>
    <property type="project" value="UniProtKB-UniRule"/>
</dbReference>
<dbReference type="GO" id="GO:0006260">
    <property type="term" value="P:DNA replication"/>
    <property type="evidence" value="ECO:0007669"/>
    <property type="project" value="UniProtKB-UniRule"/>
</dbReference>
<dbReference type="GO" id="GO:0000731">
    <property type="term" value="P:DNA synthesis involved in DNA repair"/>
    <property type="evidence" value="ECO:0007669"/>
    <property type="project" value="TreeGrafter"/>
</dbReference>
<dbReference type="GO" id="GO:0006302">
    <property type="term" value="P:double-strand break repair"/>
    <property type="evidence" value="ECO:0007669"/>
    <property type="project" value="TreeGrafter"/>
</dbReference>
<dbReference type="GO" id="GO:0009432">
    <property type="term" value="P:SOS response"/>
    <property type="evidence" value="ECO:0007669"/>
    <property type="project" value="UniProtKB-UniRule"/>
</dbReference>
<dbReference type="FunFam" id="1.20.1050.90:FF:000001">
    <property type="entry name" value="DNA replication and repair protein RecF"/>
    <property type="match status" value="1"/>
</dbReference>
<dbReference type="Gene3D" id="3.40.50.300">
    <property type="entry name" value="P-loop containing nucleotide triphosphate hydrolases"/>
    <property type="match status" value="1"/>
</dbReference>
<dbReference type="Gene3D" id="1.20.1050.90">
    <property type="entry name" value="RecF/RecN/SMC, N-terminal domain"/>
    <property type="match status" value="1"/>
</dbReference>
<dbReference type="HAMAP" id="MF_00365">
    <property type="entry name" value="RecF"/>
    <property type="match status" value="1"/>
</dbReference>
<dbReference type="InterPro" id="IPR001238">
    <property type="entry name" value="DNA-binding_RecF"/>
</dbReference>
<dbReference type="InterPro" id="IPR018078">
    <property type="entry name" value="DNA-binding_RecF_CS"/>
</dbReference>
<dbReference type="InterPro" id="IPR027417">
    <property type="entry name" value="P-loop_NTPase"/>
</dbReference>
<dbReference type="InterPro" id="IPR003395">
    <property type="entry name" value="RecF/RecN/SMC_N"/>
</dbReference>
<dbReference type="InterPro" id="IPR042174">
    <property type="entry name" value="RecF_2"/>
</dbReference>
<dbReference type="NCBIfam" id="TIGR00611">
    <property type="entry name" value="recf"/>
    <property type="match status" value="1"/>
</dbReference>
<dbReference type="PANTHER" id="PTHR32182">
    <property type="entry name" value="DNA REPLICATION AND REPAIR PROTEIN RECF"/>
    <property type="match status" value="1"/>
</dbReference>
<dbReference type="PANTHER" id="PTHR32182:SF0">
    <property type="entry name" value="DNA REPLICATION AND REPAIR PROTEIN RECF"/>
    <property type="match status" value="1"/>
</dbReference>
<dbReference type="Pfam" id="PF02463">
    <property type="entry name" value="SMC_N"/>
    <property type="match status" value="1"/>
</dbReference>
<dbReference type="SUPFAM" id="SSF52540">
    <property type="entry name" value="P-loop containing nucleoside triphosphate hydrolases"/>
    <property type="match status" value="1"/>
</dbReference>
<dbReference type="PROSITE" id="PS00617">
    <property type="entry name" value="RECF_1"/>
    <property type="match status" value="1"/>
</dbReference>
<dbReference type="PROSITE" id="PS00618">
    <property type="entry name" value="RECF_2"/>
    <property type="match status" value="1"/>
</dbReference>
<name>RECF_SHIBS</name>
<feature type="chain" id="PRO_0000236143" description="DNA replication and repair protein RecF">
    <location>
        <begin position="1"/>
        <end position="357"/>
    </location>
</feature>
<feature type="binding site" evidence="1">
    <location>
        <begin position="30"/>
        <end position="37"/>
    </location>
    <ligand>
        <name>ATP</name>
        <dbReference type="ChEBI" id="CHEBI:30616"/>
    </ligand>
</feature>
<sequence>MSLTRLLIRDFRNIETADLALSPGFNFLVGANGSGKTSVLEAIYTLGHGRAFRSLQIGRVIRHEQEAFVLHGRLQGEERETAIGLTKDKQGDSKVRIDGTDGHKVAELAHLMPMQLITPEGFTLLNGGPKYRRAFLDWACFHNEPGFFTAWSNLKRLLKQRNAALRQVTRYEQLRPWDKELIPLVEQISTWRAEYSAGIAADMADTCKQFLPEFSLTFSFQRGWEKETEYAEVLERNFERDRQLTYTAHGPHKADLRIRADGAPVEDTLSRGQLKLLMCALRLAQGEFLTRESGRRCLYLIDDFASELDDERRGLLASRLKATQSQVFVSAISAEHVIDMSDENSKMFTVEKGKITD</sequence>
<accession>Q31UV3</accession>
<organism>
    <name type="scientific">Shigella boydii serotype 4 (strain Sb227)</name>
    <dbReference type="NCBI Taxonomy" id="300268"/>
    <lineage>
        <taxon>Bacteria</taxon>
        <taxon>Pseudomonadati</taxon>
        <taxon>Pseudomonadota</taxon>
        <taxon>Gammaproteobacteria</taxon>
        <taxon>Enterobacterales</taxon>
        <taxon>Enterobacteriaceae</taxon>
        <taxon>Shigella</taxon>
    </lineage>
</organism>
<comment type="function">
    <text evidence="1">The RecF protein is involved in DNA metabolism; it is required for DNA replication and normal SOS inducibility. RecF binds preferentially to single-stranded, linear DNA. It also seems to bind ATP.</text>
</comment>
<comment type="subcellular location">
    <subcellularLocation>
        <location evidence="1">Cytoplasm</location>
    </subcellularLocation>
</comment>
<comment type="similarity">
    <text evidence="1">Belongs to the RecF family.</text>
</comment>
<protein>
    <recommendedName>
        <fullName evidence="1">DNA replication and repair protein RecF</fullName>
    </recommendedName>
</protein>
<evidence type="ECO:0000255" key="1">
    <source>
        <dbReference type="HAMAP-Rule" id="MF_00365"/>
    </source>
</evidence>
<reference key="1">
    <citation type="journal article" date="2005" name="Nucleic Acids Res.">
        <title>Genome dynamics and diversity of Shigella species, the etiologic agents of bacillary dysentery.</title>
        <authorList>
            <person name="Yang F."/>
            <person name="Yang J."/>
            <person name="Zhang X."/>
            <person name="Chen L."/>
            <person name="Jiang Y."/>
            <person name="Yan Y."/>
            <person name="Tang X."/>
            <person name="Wang J."/>
            <person name="Xiong Z."/>
            <person name="Dong J."/>
            <person name="Xue Y."/>
            <person name="Zhu Y."/>
            <person name="Xu X."/>
            <person name="Sun L."/>
            <person name="Chen S."/>
            <person name="Nie H."/>
            <person name="Peng J."/>
            <person name="Xu J."/>
            <person name="Wang Y."/>
            <person name="Yuan Z."/>
            <person name="Wen Y."/>
            <person name="Yao Z."/>
            <person name="Shen Y."/>
            <person name="Qiang B."/>
            <person name="Hou Y."/>
            <person name="Yu J."/>
            <person name="Jin Q."/>
        </authorList>
    </citation>
    <scope>NUCLEOTIDE SEQUENCE [LARGE SCALE GENOMIC DNA]</scope>
    <source>
        <strain>Sb227</strain>
    </source>
</reference>
<gene>
    <name evidence="1" type="primary">recF</name>
    <name type="ordered locus">SBO_3677</name>
</gene>
<proteinExistence type="inferred from homology"/>